<organism>
    <name type="scientific">Pectobacterium carotovorum subsp. carotovorum (strain PC1)</name>
    <dbReference type="NCBI Taxonomy" id="561230"/>
    <lineage>
        <taxon>Bacteria</taxon>
        <taxon>Pseudomonadati</taxon>
        <taxon>Pseudomonadota</taxon>
        <taxon>Gammaproteobacteria</taxon>
        <taxon>Enterobacterales</taxon>
        <taxon>Pectobacteriaceae</taxon>
        <taxon>Pectobacterium</taxon>
    </lineage>
</organism>
<proteinExistence type="inferred from homology"/>
<gene>
    <name evidence="1" type="primary">ttcA</name>
    <name type="ordered locus">PC1_2316</name>
</gene>
<feature type="chain" id="PRO_1000216132" description="tRNA-cytidine(32) 2-sulfurtransferase">
    <location>
        <begin position="1"/>
        <end position="311"/>
    </location>
</feature>
<feature type="short sequence motif" description="PP-loop motif" evidence="1">
    <location>
        <begin position="47"/>
        <end position="52"/>
    </location>
</feature>
<feature type="binding site" evidence="1">
    <location>
        <position position="122"/>
    </location>
    <ligand>
        <name>[4Fe-4S] cluster</name>
        <dbReference type="ChEBI" id="CHEBI:49883"/>
    </ligand>
</feature>
<feature type="binding site" evidence="1">
    <location>
        <position position="125"/>
    </location>
    <ligand>
        <name>[4Fe-4S] cluster</name>
        <dbReference type="ChEBI" id="CHEBI:49883"/>
    </ligand>
</feature>
<feature type="binding site" evidence="1">
    <location>
        <position position="213"/>
    </location>
    <ligand>
        <name>[4Fe-4S] cluster</name>
        <dbReference type="ChEBI" id="CHEBI:49883"/>
    </ligand>
</feature>
<comment type="function">
    <text evidence="1">Catalyzes the ATP-dependent 2-thiolation of cytidine in position 32 of tRNA, to form 2-thiocytidine (s(2)C32). The sulfur atoms are provided by the cysteine/cysteine desulfurase (IscS) system.</text>
</comment>
<comment type="catalytic activity">
    <reaction evidence="1">
        <text>cytidine(32) in tRNA + S-sulfanyl-L-cysteinyl-[cysteine desulfurase] + AH2 + ATP = 2-thiocytidine(32) in tRNA + L-cysteinyl-[cysteine desulfurase] + A + AMP + diphosphate + H(+)</text>
        <dbReference type="Rhea" id="RHEA:57048"/>
        <dbReference type="Rhea" id="RHEA-COMP:10288"/>
        <dbReference type="Rhea" id="RHEA-COMP:12157"/>
        <dbReference type="Rhea" id="RHEA-COMP:12158"/>
        <dbReference type="Rhea" id="RHEA-COMP:14821"/>
        <dbReference type="ChEBI" id="CHEBI:13193"/>
        <dbReference type="ChEBI" id="CHEBI:15378"/>
        <dbReference type="ChEBI" id="CHEBI:17499"/>
        <dbReference type="ChEBI" id="CHEBI:29950"/>
        <dbReference type="ChEBI" id="CHEBI:30616"/>
        <dbReference type="ChEBI" id="CHEBI:33019"/>
        <dbReference type="ChEBI" id="CHEBI:61963"/>
        <dbReference type="ChEBI" id="CHEBI:82748"/>
        <dbReference type="ChEBI" id="CHEBI:141453"/>
        <dbReference type="ChEBI" id="CHEBI:456215"/>
    </reaction>
    <physiologicalReaction direction="left-to-right" evidence="1">
        <dbReference type="Rhea" id="RHEA:57049"/>
    </physiologicalReaction>
</comment>
<comment type="cofactor">
    <cofactor evidence="1">
        <name>Mg(2+)</name>
        <dbReference type="ChEBI" id="CHEBI:18420"/>
    </cofactor>
</comment>
<comment type="cofactor">
    <cofactor evidence="1">
        <name>[4Fe-4S] cluster</name>
        <dbReference type="ChEBI" id="CHEBI:49883"/>
    </cofactor>
    <text evidence="1">Binds 1 [4Fe-4S] cluster per subunit. The cluster is chelated by three Cys residues, the fourth Fe has a free coordination site that may bind a sulfur atom transferred from the persulfide of IscS.</text>
</comment>
<comment type="pathway">
    <text evidence="1">tRNA modification.</text>
</comment>
<comment type="subunit">
    <text evidence="1">Homodimer.</text>
</comment>
<comment type="subcellular location">
    <subcellularLocation>
        <location evidence="1">Cytoplasm</location>
    </subcellularLocation>
</comment>
<comment type="miscellaneous">
    <text evidence="1">The thiolation reaction likely consists of two steps: a first activation step by ATP to form an adenylated intermediate of the target base of tRNA, and a second nucleophilic substitution step of the sulfur (S) atom supplied by the hydrosulfide attached to the Fe-S cluster.</text>
</comment>
<comment type="similarity">
    <text evidence="1">Belongs to the TtcA family.</text>
</comment>
<name>TTCA_PECCP</name>
<reference key="1">
    <citation type="submission" date="2009-07" db="EMBL/GenBank/DDBJ databases">
        <title>Complete sequence of Pectobacterium carotovorum subsp. carotovorum PC1.</title>
        <authorList>
            <consortium name="US DOE Joint Genome Institute"/>
            <person name="Lucas S."/>
            <person name="Copeland A."/>
            <person name="Lapidus A."/>
            <person name="Glavina del Rio T."/>
            <person name="Tice H."/>
            <person name="Bruce D."/>
            <person name="Goodwin L."/>
            <person name="Pitluck S."/>
            <person name="Munk A.C."/>
            <person name="Brettin T."/>
            <person name="Detter J.C."/>
            <person name="Han C."/>
            <person name="Tapia R."/>
            <person name="Larimer F."/>
            <person name="Land M."/>
            <person name="Hauser L."/>
            <person name="Kyrpides N."/>
            <person name="Mikhailova N."/>
            <person name="Balakrishnan V."/>
            <person name="Glasner J."/>
            <person name="Perna N.T."/>
        </authorList>
    </citation>
    <scope>NUCLEOTIDE SEQUENCE [LARGE SCALE GENOMIC DNA]</scope>
    <source>
        <strain>PC1</strain>
    </source>
</reference>
<sequence>MSENQQINQKQQYNLNKLQKRLRRNVGEAIADFNMIEEGDRIMVCLSGGKDSFTMLEILRNLQQSAPVNFSLVAVNLDQKQPGFPEHVLPQYLDSIGVEYKIVEENTYGIVKDKIPEGKTTCSLCSRLRRGILYRTATELGATKIALGHHRDDILQTLFLNMFYGGKLKGMPPKLMSDDGKHVVIRPLAYCREKDIERFAEARQYPIIPCNLCGSQPNLQRQVIKDMLRDWDKRYPGRIETMFSAMQNVVPSHLADHALFDFKGIRHGSDVVDGGDLAFDREELPLQPVGWQPEDDEEAPSLTRLDVLEIK</sequence>
<accession>C6DJ78</accession>
<keyword id="KW-0004">4Fe-4S</keyword>
<keyword id="KW-0067">ATP-binding</keyword>
<keyword id="KW-0963">Cytoplasm</keyword>
<keyword id="KW-0408">Iron</keyword>
<keyword id="KW-0411">Iron-sulfur</keyword>
<keyword id="KW-0460">Magnesium</keyword>
<keyword id="KW-0479">Metal-binding</keyword>
<keyword id="KW-0547">Nucleotide-binding</keyword>
<keyword id="KW-0694">RNA-binding</keyword>
<keyword id="KW-0808">Transferase</keyword>
<keyword id="KW-0819">tRNA processing</keyword>
<keyword id="KW-0820">tRNA-binding</keyword>
<dbReference type="EC" id="2.8.1.-" evidence="1"/>
<dbReference type="EMBL" id="CP001657">
    <property type="protein sequence ID" value="ACT13348.1"/>
    <property type="molecule type" value="Genomic_DNA"/>
</dbReference>
<dbReference type="RefSeq" id="WP_015840534.1">
    <property type="nucleotide sequence ID" value="NC_012917.1"/>
</dbReference>
<dbReference type="SMR" id="C6DJ78"/>
<dbReference type="STRING" id="561230.PC1_2316"/>
<dbReference type="KEGG" id="pct:PC1_2316"/>
<dbReference type="eggNOG" id="COG0037">
    <property type="taxonomic scope" value="Bacteria"/>
</dbReference>
<dbReference type="HOGENOM" id="CLU_026481_0_0_6"/>
<dbReference type="OrthoDB" id="9801054at2"/>
<dbReference type="Proteomes" id="UP000002736">
    <property type="component" value="Chromosome"/>
</dbReference>
<dbReference type="GO" id="GO:0005737">
    <property type="term" value="C:cytoplasm"/>
    <property type="evidence" value="ECO:0007669"/>
    <property type="project" value="UniProtKB-SubCell"/>
</dbReference>
<dbReference type="GO" id="GO:0051539">
    <property type="term" value="F:4 iron, 4 sulfur cluster binding"/>
    <property type="evidence" value="ECO:0007669"/>
    <property type="project" value="UniProtKB-UniRule"/>
</dbReference>
<dbReference type="GO" id="GO:0005524">
    <property type="term" value="F:ATP binding"/>
    <property type="evidence" value="ECO:0007669"/>
    <property type="project" value="UniProtKB-UniRule"/>
</dbReference>
<dbReference type="GO" id="GO:0000287">
    <property type="term" value="F:magnesium ion binding"/>
    <property type="evidence" value="ECO:0007669"/>
    <property type="project" value="UniProtKB-UniRule"/>
</dbReference>
<dbReference type="GO" id="GO:0016783">
    <property type="term" value="F:sulfurtransferase activity"/>
    <property type="evidence" value="ECO:0007669"/>
    <property type="project" value="UniProtKB-UniRule"/>
</dbReference>
<dbReference type="GO" id="GO:0000049">
    <property type="term" value="F:tRNA binding"/>
    <property type="evidence" value="ECO:0007669"/>
    <property type="project" value="UniProtKB-KW"/>
</dbReference>
<dbReference type="GO" id="GO:0034227">
    <property type="term" value="P:tRNA thio-modification"/>
    <property type="evidence" value="ECO:0007669"/>
    <property type="project" value="UniProtKB-UniRule"/>
</dbReference>
<dbReference type="CDD" id="cd24138">
    <property type="entry name" value="TtcA-like"/>
    <property type="match status" value="1"/>
</dbReference>
<dbReference type="Gene3D" id="3.40.50.620">
    <property type="entry name" value="HUPs"/>
    <property type="match status" value="1"/>
</dbReference>
<dbReference type="HAMAP" id="MF_01850">
    <property type="entry name" value="TtcA"/>
    <property type="match status" value="1"/>
</dbReference>
<dbReference type="InterPro" id="IPR014729">
    <property type="entry name" value="Rossmann-like_a/b/a_fold"/>
</dbReference>
<dbReference type="InterPro" id="IPR011063">
    <property type="entry name" value="TilS/TtcA_N"/>
</dbReference>
<dbReference type="InterPro" id="IPR012089">
    <property type="entry name" value="tRNA_Cyd_32_2_STrfase"/>
</dbReference>
<dbReference type="InterPro" id="IPR035107">
    <property type="entry name" value="tRNA_thiolation_TtcA_Ctu1"/>
</dbReference>
<dbReference type="NCBIfam" id="NF007972">
    <property type="entry name" value="PRK10696.1"/>
    <property type="match status" value="1"/>
</dbReference>
<dbReference type="PANTHER" id="PTHR43686:SF1">
    <property type="entry name" value="AMINOTRAN_5 DOMAIN-CONTAINING PROTEIN"/>
    <property type="match status" value="1"/>
</dbReference>
<dbReference type="PANTHER" id="PTHR43686">
    <property type="entry name" value="SULFURTRANSFERASE-RELATED"/>
    <property type="match status" value="1"/>
</dbReference>
<dbReference type="Pfam" id="PF01171">
    <property type="entry name" value="ATP_bind_3"/>
    <property type="match status" value="1"/>
</dbReference>
<dbReference type="PIRSF" id="PIRSF004976">
    <property type="entry name" value="ATPase_YdaO"/>
    <property type="match status" value="1"/>
</dbReference>
<dbReference type="SUPFAM" id="SSF52402">
    <property type="entry name" value="Adenine nucleotide alpha hydrolases-like"/>
    <property type="match status" value="1"/>
</dbReference>
<protein>
    <recommendedName>
        <fullName evidence="1">tRNA-cytidine(32) 2-sulfurtransferase</fullName>
        <ecNumber evidence="1">2.8.1.-</ecNumber>
    </recommendedName>
    <alternativeName>
        <fullName evidence="1">Two-thiocytidine biosynthesis protein A</fullName>
    </alternativeName>
    <alternativeName>
        <fullName evidence="1">tRNA 2-thiocytidine biosynthesis protein TtcA</fullName>
    </alternativeName>
</protein>
<evidence type="ECO:0000255" key="1">
    <source>
        <dbReference type="HAMAP-Rule" id="MF_01850"/>
    </source>
</evidence>